<keyword id="KW-1003">Cell membrane</keyword>
<keyword id="KW-0325">Glycoprotein</keyword>
<keyword id="KW-0472">Membrane</keyword>
<keyword id="KW-0812">Transmembrane</keyword>
<keyword id="KW-1133">Transmembrane helix</keyword>
<keyword id="KW-0813">Transport</keyword>
<keyword id="KW-0926">Vacuole</keyword>
<sequence length="585" mass="62392">MSEDHTKADNLSEKDPHSPERSDSSSHEDAHAREEEESSDDDGALDGKPASLIAIVMIALSLIGLQLAVFLSALDTTIVTVALPAISAHFNSTAAYTWVGSAYLLANAASTPIWGKLADIFGRKPMLLLANALFMIGSLVCALSINVGMLITARAIQGAAGGGLLTLVDTIIGDLFSLRTRGTYLGMIGGVWAIACALGPIVGGAFTSSVTWRWCFYINLPIDGLAFGIIFFFLKLKTPKTPILEGFAAIDWAGSFFIIGGTLMFLFGLQYGGITFPWDSATVICLLVFGVVCIVLFGLVEWKFARFPIIPLRLFQYRNNCGALLVAFFHSFVFTSAFYYLPLYFQAVKGATPILAGVYILPAVLSTGVSAAATGAFIGNTGNYLIPMYFGMSMMILGYGLLINFDAGSGWAKLIIYQLIAGIGNGPNFQAPLVALQTKIKQSDIATGTATFNFVRNIATAISVVAGQVLYQNQLKKMTSTLQQLGPAASLIAAGDAGANTQAINALPTPQRDLARSAIADALSPMWIMYTAFAAAGLFCILLVSKTELTTTHEVTEVGLEAQKKAEAERKAERQAKDLEKAQKS</sequence>
<proteinExistence type="evidence at transcript level"/>
<dbReference type="EMBL" id="AF448056">
    <property type="protein sequence ID" value="AAL87047.2"/>
    <property type="molecule type" value="Genomic_DNA"/>
</dbReference>
<dbReference type="SMR" id="Q8TFD3"/>
<dbReference type="GlyCosmos" id="Q8TFD3">
    <property type="glycosylation" value="2 sites, No reported glycans"/>
</dbReference>
<dbReference type="GO" id="GO:0005886">
    <property type="term" value="C:plasma membrane"/>
    <property type="evidence" value="ECO:0007669"/>
    <property type="project" value="UniProtKB-SubCell"/>
</dbReference>
<dbReference type="GO" id="GO:0005774">
    <property type="term" value="C:vacuolar membrane"/>
    <property type="evidence" value="ECO:0007669"/>
    <property type="project" value="UniProtKB-SubCell"/>
</dbReference>
<dbReference type="GO" id="GO:0022857">
    <property type="term" value="F:transmembrane transporter activity"/>
    <property type="evidence" value="ECO:0007669"/>
    <property type="project" value="InterPro"/>
</dbReference>
<dbReference type="CDD" id="cd17502">
    <property type="entry name" value="MFS_Azr1_MDR_like"/>
    <property type="match status" value="1"/>
</dbReference>
<dbReference type="FunFam" id="1.20.1720.10:FF:000014">
    <property type="entry name" value="MFS drug transporter, putative"/>
    <property type="match status" value="1"/>
</dbReference>
<dbReference type="FunFam" id="1.20.1250.20:FF:000196">
    <property type="entry name" value="MFS toxin efflux pump (AflT)"/>
    <property type="match status" value="1"/>
</dbReference>
<dbReference type="Gene3D" id="1.20.1250.20">
    <property type="entry name" value="MFS general substrate transporter like domains"/>
    <property type="match status" value="1"/>
</dbReference>
<dbReference type="Gene3D" id="1.20.1720.10">
    <property type="entry name" value="Multidrug resistance protein D"/>
    <property type="match status" value="1"/>
</dbReference>
<dbReference type="InterPro" id="IPR011701">
    <property type="entry name" value="MFS"/>
</dbReference>
<dbReference type="InterPro" id="IPR020846">
    <property type="entry name" value="MFS_dom"/>
</dbReference>
<dbReference type="InterPro" id="IPR036259">
    <property type="entry name" value="MFS_trans_sf"/>
</dbReference>
<dbReference type="PANTHER" id="PTHR23501:SF102">
    <property type="entry name" value="DRUG TRANSPORTER, PUTATIVE (AFU_ORTHOLOGUE AFUA_3G08530)-RELATED"/>
    <property type="match status" value="1"/>
</dbReference>
<dbReference type="PANTHER" id="PTHR23501">
    <property type="entry name" value="MAJOR FACILITATOR SUPERFAMILY"/>
    <property type="match status" value="1"/>
</dbReference>
<dbReference type="Pfam" id="PF07690">
    <property type="entry name" value="MFS_1"/>
    <property type="match status" value="1"/>
</dbReference>
<dbReference type="PRINTS" id="PR01036">
    <property type="entry name" value="TCRTETB"/>
</dbReference>
<dbReference type="SUPFAM" id="SSF103473">
    <property type="entry name" value="MFS general substrate transporter"/>
    <property type="match status" value="1"/>
</dbReference>
<dbReference type="PROSITE" id="PS50850">
    <property type="entry name" value="MFS"/>
    <property type="match status" value="1"/>
</dbReference>
<accession>Q8TFD3</accession>
<reference key="1">
    <citation type="journal article" date="2002" name="Appl. Environ. Microbiol.">
        <title>Dothistroma pini, a forest pathogen, contains homologs of aflatoxin biosynthetic pathway genes.</title>
        <authorList>
            <person name="Bradshaw R.E."/>
            <person name="Bhatnagar D."/>
            <person name="Ganley R.J."/>
            <person name="Gillman C.J."/>
            <person name="Monahan B.J."/>
            <person name="Seconi J.M."/>
        </authorList>
    </citation>
    <scope>NUCLEOTIDE SEQUENCE [GENOMIC DNA]</scope>
    <scope>FUNCTION</scope>
    <source>
        <strain>NZE1 / ATCC MYA-605</strain>
    </source>
</reference>
<reference key="2">
    <citation type="journal article" date="2007" name="Fungal Genet. Biol.">
        <title>A fragmented aflatoxin-like gene cluster in the forest pathogen Dothistroma septosporum.</title>
        <authorList>
            <person name="Zhang S."/>
            <person name="Schwelm A."/>
            <person name="Jin H."/>
            <person name="Collins L.J."/>
            <person name="Bradshaw R.E."/>
        </authorList>
    </citation>
    <scope>NUCLEOTIDE SEQUENCE [GENOMIC DNA]</scope>
    <scope>FUNCTION</scope>
    <source>
        <strain>NZE7</strain>
    </source>
</reference>
<reference key="3">
    <citation type="submission" date="2009-11" db="EMBL/GenBank/DDBJ databases">
        <authorList>
            <person name="Bradshaw R.E."/>
            <person name="Monahan B.J."/>
            <person name="Gillman C.J."/>
        </authorList>
    </citation>
    <scope>NUCLEOTIDE SEQUENCE [GENOMIC DNA]</scope>
    <source>
        <strain>NZE1 / ATCC MYA-605</strain>
    </source>
</reference>
<reference key="4">
    <citation type="journal article" date="2009" name="Toxins">
        <title>Functional analysis of a putative dothistromin toxin MFS transporter gene.</title>
        <authorList>
            <person name="Bradshaw R.E."/>
            <person name="Feng Z."/>
            <person name="Schwelm A."/>
            <person name="Yang Y."/>
            <person name="Zhang S."/>
        </authorList>
    </citation>
    <scope>FUNCTION</scope>
    <scope>DISRUPTION PHENOTYPE</scope>
    <scope>SUBCELLULAR LOCATION</scope>
</reference>
<reference key="5">
    <citation type="journal article" date="2013" name="Fungal Genet. Biol.">
        <title>Dothistromin genes at multiple separate loci are regulated by AflR.</title>
        <authorList>
            <person name="Chettri P."/>
            <person name="Ehrlich K.C."/>
            <person name="Cary J.W."/>
            <person name="Collemare J."/>
            <person name="Cox M.P."/>
            <person name="Griffiths S.A."/>
            <person name="Olson M.A."/>
            <person name="de Wit P.J."/>
            <person name="Bradshaw R.E."/>
        </authorList>
    </citation>
    <scope>INDUCTION</scope>
</reference>
<evidence type="ECO:0000255" key="1"/>
<evidence type="ECO:0000255" key="2">
    <source>
        <dbReference type="PROSITE-ProRule" id="PRU00498"/>
    </source>
</evidence>
<evidence type="ECO:0000256" key="3">
    <source>
        <dbReference type="SAM" id="MobiDB-lite"/>
    </source>
</evidence>
<evidence type="ECO:0000269" key="4">
    <source>
    </source>
</evidence>
<evidence type="ECO:0000269" key="5">
    <source>
    </source>
</evidence>
<evidence type="ECO:0000303" key="6">
    <source>
    </source>
</evidence>
<evidence type="ECO:0000305" key="7"/>
<evidence type="ECO:0000305" key="8">
    <source>
    </source>
</evidence>
<evidence type="ECO:0000305" key="9">
    <source>
    </source>
</evidence>
<comment type="function">
    <text evidence="4 8 9">Efflux pump; part of the gene cluster that mediates the biosynthesis of dothistromin (DOTH), a polyketide toxin very similar in structure to the aflatoxin precursor, versicolorin B (PubMed:12039746, PubMed:17683963). One function of dotC may be to transport early-stage dothistromin biosynthetic intermediates from the cytoplasm into vacuoles, thereby affecting the rate of dothistromin production (PubMed:22069539).</text>
</comment>
<comment type="subcellular location">
    <subcellularLocation>
        <location evidence="4">Cell membrane</location>
        <topology evidence="1">Multi-pass membrane protein</topology>
    </subcellularLocation>
    <subcellularLocation>
        <location evidence="4">Vacuole membrane</location>
        <topology evidence="1">Multi-pass membrane protein</topology>
    </subcellularLocation>
</comment>
<comment type="induction">
    <text evidence="5">Expression is positively regulated by the dothistromin-specific transcription factor aflR (PubMed:23207690).</text>
</comment>
<comment type="disruption phenotype">
    <text evidence="4">Decreases the expression of ver1, pksA and vbsA, and subsequent production of dothistromin, but does not affect the resistance to the toxin (PubMed:22069539).</text>
</comment>
<comment type="similarity">
    <text evidence="7">Belongs to the major facilitator superfamily. TCR/Tet family.</text>
</comment>
<gene>
    <name evidence="6" type="primary">dotC</name>
</gene>
<name>DOTC_DOTSE</name>
<feature type="chain" id="PRO_0000443454" description="Efflux pump dotC">
    <location>
        <begin position="1"/>
        <end position="585"/>
    </location>
</feature>
<feature type="transmembrane region" description="Helical" evidence="1">
    <location>
        <begin position="51"/>
        <end position="71"/>
    </location>
</feature>
<feature type="transmembrane region" description="Helical" evidence="1">
    <location>
        <begin position="94"/>
        <end position="114"/>
    </location>
</feature>
<feature type="transmembrane region" description="Helical" evidence="1">
    <location>
        <begin position="132"/>
        <end position="152"/>
    </location>
</feature>
<feature type="transmembrane region" description="Helical" evidence="1">
    <location>
        <begin position="158"/>
        <end position="178"/>
    </location>
</feature>
<feature type="transmembrane region" description="Helical" evidence="1">
    <location>
        <begin position="186"/>
        <end position="206"/>
    </location>
</feature>
<feature type="transmembrane region" description="Helical" evidence="1">
    <location>
        <begin position="214"/>
        <end position="234"/>
    </location>
</feature>
<feature type="transmembrane region" description="Helical" evidence="1">
    <location>
        <begin position="247"/>
        <end position="267"/>
    </location>
</feature>
<feature type="transmembrane region" description="Helical" evidence="1">
    <location>
        <begin position="280"/>
        <end position="300"/>
    </location>
</feature>
<feature type="transmembrane region" description="Helical" evidence="1">
    <location>
        <begin position="323"/>
        <end position="343"/>
    </location>
</feature>
<feature type="transmembrane region" description="Helical" evidence="1">
    <location>
        <begin position="353"/>
        <end position="373"/>
    </location>
</feature>
<feature type="transmembrane region" description="Helical" evidence="1">
    <location>
        <begin position="385"/>
        <end position="405"/>
    </location>
</feature>
<feature type="transmembrane region" description="Helical" evidence="1">
    <location>
        <begin position="414"/>
        <end position="434"/>
    </location>
</feature>
<feature type="transmembrane region" description="Helical" evidence="1">
    <location>
        <begin position="449"/>
        <end position="471"/>
    </location>
</feature>
<feature type="transmembrane region" description="Helical" evidence="1">
    <location>
        <begin position="524"/>
        <end position="544"/>
    </location>
</feature>
<feature type="region of interest" description="Disordered" evidence="3">
    <location>
        <begin position="1"/>
        <end position="45"/>
    </location>
</feature>
<feature type="region of interest" description="Disordered" evidence="3">
    <location>
        <begin position="564"/>
        <end position="585"/>
    </location>
</feature>
<feature type="compositionally biased region" description="Basic and acidic residues" evidence="3">
    <location>
        <begin position="1"/>
        <end position="34"/>
    </location>
</feature>
<feature type="compositionally biased region" description="Acidic residues" evidence="3">
    <location>
        <begin position="35"/>
        <end position="44"/>
    </location>
</feature>
<feature type="glycosylation site" description="N-linked (GlcNAc...) asparagine" evidence="2">
    <location>
        <position position="10"/>
    </location>
</feature>
<feature type="glycosylation site" description="N-linked (GlcNAc...) asparagine" evidence="2">
    <location>
        <position position="91"/>
    </location>
</feature>
<protein>
    <recommendedName>
        <fullName evidence="7">Efflux pump dotC</fullName>
    </recommendedName>
    <alternativeName>
        <fullName evidence="6">Dothistromin biosynthesis protein C</fullName>
    </alternativeName>
</protein>
<organism>
    <name type="scientific">Dothistroma septosporum</name>
    <name type="common">Red band needle blight fungus</name>
    <name type="synonym">Mycosphaerella pini</name>
    <dbReference type="NCBI Taxonomy" id="64363"/>
    <lineage>
        <taxon>Eukaryota</taxon>
        <taxon>Fungi</taxon>
        <taxon>Dikarya</taxon>
        <taxon>Ascomycota</taxon>
        <taxon>Pezizomycotina</taxon>
        <taxon>Dothideomycetes</taxon>
        <taxon>Dothideomycetidae</taxon>
        <taxon>Mycosphaerellales</taxon>
        <taxon>Mycosphaerellaceae</taxon>
        <taxon>Dothistroma</taxon>
    </lineage>
</organism>